<feature type="chain" id="PRO_0000062317" description="Large ribosomal subunit protein uL16c">
    <location>
        <begin position="1"/>
        <end position="134"/>
    </location>
</feature>
<feature type="region of interest" description="Disordered" evidence="2">
    <location>
        <begin position="1"/>
        <end position="22"/>
    </location>
</feature>
<accession>P06384</accession>
<keyword id="KW-0150">Chloroplast</keyword>
<keyword id="KW-0934">Plastid</keyword>
<keyword id="KW-1185">Reference proteome</keyword>
<keyword id="KW-0687">Ribonucleoprotein</keyword>
<keyword id="KW-0689">Ribosomal protein</keyword>
<name>RK16_TOBAC</name>
<reference key="1">
    <citation type="journal article" date="1986" name="EMBO J.">
        <title>The complete nucleotide sequence of the tobacco chloroplast genome: its gene organization and expression.</title>
        <authorList>
            <person name="Shinozaki K."/>
            <person name="Ohme M."/>
            <person name="Tanaka M."/>
            <person name="Wakasugi T."/>
            <person name="Hayashida N."/>
            <person name="Matsubayashi T."/>
            <person name="Zaita N."/>
            <person name="Chunwongse J."/>
            <person name="Obokata J."/>
            <person name="Yamaguchi-Shinozaki K."/>
            <person name="Ohto C."/>
            <person name="Torazawa K."/>
            <person name="Meng B.-Y."/>
            <person name="Sugita M."/>
            <person name="Deno H."/>
            <person name="Kamogashira T."/>
            <person name="Yamada K."/>
            <person name="Kusuda J."/>
            <person name="Takaiwa F."/>
            <person name="Kato A."/>
            <person name="Tohdoh N."/>
            <person name="Shimada H."/>
            <person name="Sugiura M."/>
        </authorList>
    </citation>
    <scope>NUCLEOTIDE SEQUENCE [LARGE SCALE GENOMIC DNA]</scope>
    <source>
        <strain>cv. Bright Yellow 4</strain>
    </source>
</reference>
<reference key="2">
    <citation type="journal article" date="1986" name="Proc. Natl. Acad. Sci. U.S.A.">
        <title>Genes for the eight ribosomal proteins are clustered on the chloroplast genome of tobacco (Nicotiana tabacum): similarity to the S10 and spc operons of Escherichia coli.</title>
        <authorList>
            <person name="Tanaka M."/>
            <person name="Wakasugi T."/>
            <person name="Sugita M."/>
            <person name="Shinozaki K."/>
            <person name="Sugiura M."/>
        </authorList>
    </citation>
    <scope>NUCLEOTIDE SEQUENCE [GENOMIC DNA]</scope>
</reference>
<comment type="subunit">
    <text evidence="1">Part of the 50S ribosomal subunit.</text>
</comment>
<comment type="subcellular location">
    <subcellularLocation>
        <location>Plastid</location>
        <location>Chloroplast</location>
    </subcellularLocation>
</comment>
<comment type="similarity">
    <text evidence="1">Belongs to the universal ribosomal protein uL16 family.</text>
</comment>
<gene>
    <name evidence="1" type="primary">rpl16</name>
</gene>
<evidence type="ECO:0000255" key="1">
    <source>
        <dbReference type="HAMAP-Rule" id="MF_01342"/>
    </source>
</evidence>
<evidence type="ECO:0000256" key="2">
    <source>
        <dbReference type="SAM" id="MobiDB-lite"/>
    </source>
</evidence>
<evidence type="ECO:0000305" key="3"/>
<sequence>MLSPKRTRFRKQHRGRMKGISHRGNHISFGKYALQALEPAWITSRQIEAGRRAMTRNARRGGKIWVRIFPDKPVTLRPAETRMGSGKGSPEYWVAVVKPGRILYEMGGVTENIARRAISLAASKMPIRTQFIIS</sequence>
<dbReference type="EMBL" id="Z00044">
    <property type="protein sequence ID" value="CAA77380.1"/>
    <property type="molecule type" value="Genomic_DNA"/>
</dbReference>
<dbReference type="PIR" id="A02799">
    <property type="entry name" value="R5NT16"/>
</dbReference>
<dbReference type="RefSeq" id="NP_054536.1">
    <property type="nucleotide sequence ID" value="NC_001879.2"/>
</dbReference>
<dbReference type="SMR" id="P06384"/>
<dbReference type="GeneID" id="800422"/>
<dbReference type="KEGG" id="nta:800422"/>
<dbReference type="OrthoDB" id="1850746at2759"/>
<dbReference type="Proteomes" id="UP000084051">
    <property type="component" value="Unplaced"/>
</dbReference>
<dbReference type="GO" id="GO:0009507">
    <property type="term" value="C:chloroplast"/>
    <property type="evidence" value="ECO:0007669"/>
    <property type="project" value="UniProtKB-SubCell"/>
</dbReference>
<dbReference type="GO" id="GO:1990904">
    <property type="term" value="C:ribonucleoprotein complex"/>
    <property type="evidence" value="ECO:0007669"/>
    <property type="project" value="UniProtKB-KW"/>
</dbReference>
<dbReference type="GO" id="GO:0005840">
    <property type="term" value="C:ribosome"/>
    <property type="evidence" value="ECO:0007669"/>
    <property type="project" value="UniProtKB-KW"/>
</dbReference>
<dbReference type="GO" id="GO:0019843">
    <property type="term" value="F:rRNA binding"/>
    <property type="evidence" value="ECO:0007669"/>
    <property type="project" value="InterPro"/>
</dbReference>
<dbReference type="GO" id="GO:0003735">
    <property type="term" value="F:structural constituent of ribosome"/>
    <property type="evidence" value="ECO:0007669"/>
    <property type="project" value="InterPro"/>
</dbReference>
<dbReference type="GO" id="GO:0006412">
    <property type="term" value="P:translation"/>
    <property type="evidence" value="ECO:0007669"/>
    <property type="project" value="UniProtKB-UniRule"/>
</dbReference>
<dbReference type="CDD" id="cd01433">
    <property type="entry name" value="Ribosomal_L16_L10e"/>
    <property type="match status" value="1"/>
</dbReference>
<dbReference type="FunFam" id="3.90.1170.10:FF:000001">
    <property type="entry name" value="50S ribosomal protein L16"/>
    <property type="match status" value="1"/>
</dbReference>
<dbReference type="Gene3D" id="3.90.1170.10">
    <property type="entry name" value="Ribosomal protein L10e/L16"/>
    <property type="match status" value="1"/>
</dbReference>
<dbReference type="HAMAP" id="MF_01342">
    <property type="entry name" value="Ribosomal_uL16"/>
    <property type="match status" value="1"/>
</dbReference>
<dbReference type="InterPro" id="IPR047873">
    <property type="entry name" value="Ribosomal_uL16"/>
</dbReference>
<dbReference type="InterPro" id="IPR000114">
    <property type="entry name" value="Ribosomal_uL16_bact-type"/>
</dbReference>
<dbReference type="InterPro" id="IPR020798">
    <property type="entry name" value="Ribosomal_uL16_CS"/>
</dbReference>
<dbReference type="InterPro" id="IPR016180">
    <property type="entry name" value="Ribosomal_uL16_dom"/>
</dbReference>
<dbReference type="InterPro" id="IPR036920">
    <property type="entry name" value="Ribosomal_uL16_sf"/>
</dbReference>
<dbReference type="NCBIfam" id="TIGR01164">
    <property type="entry name" value="rplP_bact"/>
    <property type="match status" value="1"/>
</dbReference>
<dbReference type="PANTHER" id="PTHR12220">
    <property type="entry name" value="50S/60S RIBOSOMAL PROTEIN L16"/>
    <property type="match status" value="1"/>
</dbReference>
<dbReference type="PANTHER" id="PTHR12220:SF13">
    <property type="entry name" value="LARGE RIBOSOMAL SUBUNIT PROTEIN UL16M"/>
    <property type="match status" value="1"/>
</dbReference>
<dbReference type="Pfam" id="PF00252">
    <property type="entry name" value="Ribosomal_L16"/>
    <property type="match status" value="1"/>
</dbReference>
<dbReference type="PRINTS" id="PR00060">
    <property type="entry name" value="RIBOSOMALL16"/>
</dbReference>
<dbReference type="SUPFAM" id="SSF54686">
    <property type="entry name" value="Ribosomal protein L16p/L10e"/>
    <property type="match status" value="1"/>
</dbReference>
<dbReference type="PROSITE" id="PS00586">
    <property type="entry name" value="RIBOSOMAL_L16_1"/>
    <property type="match status" value="1"/>
</dbReference>
<dbReference type="PROSITE" id="PS00701">
    <property type="entry name" value="RIBOSOMAL_L16_2"/>
    <property type="match status" value="1"/>
</dbReference>
<protein>
    <recommendedName>
        <fullName evidence="1">Large ribosomal subunit protein uL16c</fullName>
    </recommendedName>
    <alternativeName>
        <fullName evidence="3">50S ribosomal protein L16, chloroplastic</fullName>
    </alternativeName>
</protein>
<geneLocation type="chloroplast"/>
<proteinExistence type="inferred from homology"/>
<organism>
    <name type="scientific">Nicotiana tabacum</name>
    <name type="common">Common tobacco</name>
    <dbReference type="NCBI Taxonomy" id="4097"/>
    <lineage>
        <taxon>Eukaryota</taxon>
        <taxon>Viridiplantae</taxon>
        <taxon>Streptophyta</taxon>
        <taxon>Embryophyta</taxon>
        <taxon>Tracheophyta</taxon>
        <taxon>Spermatophyta</taxon>
        <taxon>Magnoliopsida</taxon>
        <taxon>eudicotyledons</taxon>
        <taxon>Gunneridae</taxon>
        <taxon>Pentapetalae</taxon>
        <taxon>asterids</taxon>
        <taxon>lamiids</taxon>
        <taxon>Solanales</taxon>
        <taxon>Solanaceae</taxon>
        <taxon>Nicotianoideae</taxon>
        <taxon>Nicotianeae</taxon>
        <taxon>Nicotiana</taxon>
    </lineage>
</organism>